<sequence length="192" mass="21182">MKKVGVLSLQGDFAAHGAALERAGAQPVFVREREQLNQIEGLILPGGESTTMLKLLRYEDLFDDVAEFGRTKPVFGTCAGAILMAKGVTNPAQESFGLVDIEVERNAYGRQTDSRIAQVRPFPDFENRTAPGELKAVFIRAPIIRRIEDGVRVLASYQGDPVLIEQGRFLVATFHPELTDDARVHSLFLSKL</sequence>
<accession>Q02CB5</accession>
<organism>
    <name type="scientific">Solibacter usitatus (strain Ellin6076)</name>
    <dbReference type="NCBI Taxonomy" id="234267"/>
    <lineage>
        <taxon>Bacteria</taxon>
        <taxon>Pseudomonadati</taxon>
        <taxon>Acidobacteriota</taxon>
        <taxon>Terriglobia</taxon>
        <taxon>Bryobacterales</taxon>
        <taxon>Solibacteraceae</taxon>
        <taxon>Candidatus Solibacter</taxon>
    </lineage>
</organism>
<keyword id="KW-0315">Glutamine amidotransferase</keyword>
<keyword id="KW-0378">Hydrolase</keyword>
<keyword id="KW-0456">Lyase</keyword>
<keyword id="KW-0663">Pyridoxal phosphate</keyword>
<name>PDXT_SOLUE</name>
<evidence type="ECO:0000255" key="1">
    <source>
        <dbReference type="HAMAP-Rule" id="MF_01615"/>
    </source>
</evidence>
<reference key="1">
    <citation type="journal article" date="2009" name="Appl. Environ. Microbiol.">
        <title>Three genomes from the phylum Acidobacteria provide insight into the lifestyles of these microorganisms in soils.</title>
        <authorList>
            <person name="Ward N.L."/>
            <person name="Challacombe J.F."/>
            <person name="Janssen P.H."/>
            <person name="Henrissat B."/>
            <person name="Coutinho P.M."/>
            <person name="Wu M."/>
            <person name="Xie G."/>
            <person name="Haft D.H."/>
            <person name="Sait M."/>
            <person name="Badger J."/>
            <person name="Barabote R.D."/>
            <person name="Bradley B."/>
            <person name="Brettin T.S."/>
            <person name="Brinkac L.M."/>
            <person name="Bruce D."/>
            <person name="Creasy T."/>
            <person name="Daugherty S.C."/>
            <person name="Davidsen T.M."/>
            <person name="DeBoy R.T."/>
            <person name="Detter J.C."/>
            <person name="Dodson R.J."/>
            <person name="Durkin A.S."/>
            <person name="Ganapathy A."/>
            <person name="Gwinn-Giglio M."/>
            <person name="Han C.S."/>
            <person name="Khouri H."/>
            <person name="Kiss H."/>
            <person name="Kothari S.P."/>
            <person name="Madupu R."/>
            <person name="Nelson K.E."/>
            <person name="Nelson W.C."/>
            <person name="Paulsen I."/>
            <person name="Penn K."/>
            <person name="Ren Q."/>
            <person name="Rosovitz M.J."/>
            <person name="Selengut J.D."/>
            <person name="Shrivastava S."/>
            <person name="Sullivan S.A."/>
            <person name="Tapia R."/>
            <person name="Thompson L.S."/>
            <person name="Watkins K.L."/>
            <person name="Yang Q."/>
            <person name="Yu C."/>
            <person name="Zafar N."/>
            <person name="Zhou L."/>
            <person name="Kuske C.R."/>
        </authorList>
    </citation>
    <scope>NUCLEOTIDE SEQUENCE [LARGE SCALE GENOMIC DNA]</scope>
    <source>
        <strain>Ellin6076</strain>
    </source>
</reference>
<comment type="function">
    <text evidence="1">Catalyzes the hydrolysis of glutamine to glutamate and ammonia as part of the biosynthesis of pyridoxal 5'-phosphate. The resulting ammonia molecule is channeled to the active site of PdxS.</text>
</comment>
<comment type="catalytic activity">
    <reaction evidence="1">
        <text>aldehydo-D-ribose 5-phosphate + D-glyceraldehyde 3-phosphate + L-glutamine = pyridoxal 5'-phosphate + L-glutamate + phosphate + 3 H2O + H(+)</text>
        <dbReference type="Rhea" id="RHEA:31507"/>
        <dbReference type="ChEBI" id="CHEBI:15377"/>
        <dbReference type="ChEBI" id="CHEBI:15378"/>
        <dbReference type="ChEBI" id="CHEBI:29985"/>
        <dbReference type="ChEBI" id="CHEBI:43474"/>
        <dbReference type="ChEBI" id="CHEBI:58273"/>
        <dbReference type="ChEBI" id="CHEBI:58359"/>
        <dbReference type="ChEBI" id="CHEBI:59776"/>
        <dbReference type="ChEBI" id="CHEBI:597326"/>
        <dbReference type="EC" id="4.3.3.6"/>
    </reaction>
</comment>
<comment type="catalytic activity">
    <reaction evidence="1">
        <text>L-glutamine + H2O = L-glutamate + NH4(+)</text>
        <dbReference type="Rhea" id="RHEA:15889"/>
        <dbReference type="ChEBI" id="CHEBI:15377"/>
        <dbReference type="ChEBI" id="CHEBI:28938"/>
        <dbReference type="ChEBI" id="CHEBI:29985"/>
        <dbReference type="ChEBI" id="CHEBI:58359"/>
        <dbReference type="EC" id="3.5.1.2"/>
    </reaction>
</comment>
<comment type="pathway">
    <text evidence="1">Cofactor biosynthesis; pyridoxal 5'-phosphate biosynthesis.</text>
</comment>
<comment type="subunit">
    <text evidence="1">In the presence of PdxS, forms a dodecamer of heterodimers. Only shows activity in the heterodimer.</text>
</comment>
<comment type="similarity">
    <text evidence="1">Belongs to the glutaminase PdxT/SNO family.</text>
</comment>
<gene>
    <name evidence="1" type="primary">pdxT</name>
    <name type="ordered locus">Acid_0289</name>
</gene>
<feature type="chain" id="PRO_0000293013" description="Pyridoxal 5'-phosphate synthase subunit PdxT">
    <location>
        <begin position="1"/>
        <end position="192"/>
    </location>
</feature>
<feature type="active site" description="Nucleophile" evidence="1">
    <location>
        <position position="78"/>
    </location>
</feature>
<feature type="active site" description="Charge relay system" evidence="1">
    <location>
        <position position="175"/>
    </location>
</feature>
<feature type="active site" description="Charge relay system" evidence="1">
    <location>
        <position position="177"/>
    </location>
</feature>
<feature type="binding site" evidence="1">
    <location>
        <begin position="47"/>
        <end position="49"/>
    </location>
    <ligand>
        <name>L-glutamine</name>
        <dbReference type="ChEBI" id="CHEBI:58359"/>
    </ligand>
</feature>
<feature type="binding site" evidence="1">
    <location>
        <position position="105"/>
    </location>
    <ligand>
        <name>L-glutamine</name>
        <dbReference type="ChEBI" id="CHEBI:58359"/>
    </ligand>
</feature>
<feature type="binding site" evidence="1">
    <location>
        <begin position="139"/>
        <end position="140"/>
    </location>
    <ligand>
        <name>L-glutamine</name>
        <dbReference type="ChEBI" id="CHEBI:58359"/>
    </ligand>
</feature>
<proteinExistence type="inferred from homology"/>
<dbReference type="EC" id="4.3.3.6" evidence="1"/>
<dbReference type="EC" id="3.5.1.2" evidence="1"/>
<dbReference type="EMBL" id="CP000473">
    <property type="protein sequence ID" value="ABJ81301.1"/>
    <property type="molecule type" value="Genomic_DNA"/>
</dbReference>
<dbReference type="SMR" id="Q02CB5"/>
<dbReference type="STRING" id="234267.Acid_0289"/>
<dbReference type="KEGG" id="sus:Acid_0289"/>
<dbReference type="eggNOG" id="COG0311">
    <property type="taxonomic scope" value="Bacteria"/>
</dbReference>
<dbReference type="HOGENOM" id="CLU_069674_2_0_0"/>
<dbReference type="InParanoid" id="Q02CB5"/>
<dbReference type="OrthoDB" id="9810320at2"/>
<dbReference type="UniPathway" id="UPA00245"/>
<dbReference type="GO" id="GO:0005829">
    <property type="term" value="C:cytosol"/>
    <property type="evidence" value="ECO:0007669"/>
    <property type="project" value="TreeGrafter"/>
</dbReference>
<dbReference type="GO" id="GO:1903600">
    <property type="term" value="C:glutaminase complex"/>
    <property type="evidence" value="ECO:0007669"/>
    <property type="project" value="TreeGrafter"/>
</dbReference>
<dbReference type="GO" id="GO:0004359">
    <property type="term" value="F:glutaminase activity"/>
    <property type="evidence" value="ECO:0007669"/>
    <property type="project" value="UniProtKB-UniRule"/>
</dbReference>
<dbReference type="GO" id="GO:0036381">
    <property type="term" value="F:pyridoxal 5'-phosphate synthase (glutamine hydrolysing) activity"/>
    <property type="evidence" value="ECO:0007669"/>
    <property type="project" value="UniProtKB-UniRule"/>
</dbReference>
<dbReference type="GO" id="GO:0006543">
    <property type="term" value="P:glutamine catabolic process"/>
    <property type="evidence" value="ECO:0007669"/>
    <property type="project" value="UniProtKB-UniRule"/>
</dbReference>
<dbReference type="GO" id="GO:0042823">
    <property type="term" value="P:pyridoxal phosphate biosynthetic process"/>
    <property type="evidence" value="ECO:0007669"/>
    <property type="project" value="UniProtKB-UniRule"/>
</dbReference>
<dbReference type="GO" id="GO:0008614">
    <property type="term" value="P:pyridoxine metabolic process"/>
    <property type="evidence" value="ECO:0007669"/>
    <property type="project" value="TreeGrafter"/>
</dbReference>
<dbReference type="CDD" id="cd01749">
    <property type="entry name" value="GATase1_PB"/>
    <property type="match status" value="1"/>
</dbReference>
<dbReference type="FunFam" id="3.40.50.880:FF:000010">
    <property type="entry name" value="uncharacterized protein LOC100176842 isoform X2"/>
    <property type="match status" value="1"/>
</dbReference>
<dbReference type="Gene3D" id="3.40.50.880">
    <property type="match status" value="1"/>
</dbReference>
<dbReference type="HAMAP" id="MF_01615">
    <property type="entry name" value="PdxT"/>
    <property type="match status" value="1"/>
</dbReference>
<dbReference type="InterPro" id="IPR029062">
    <property type="entry name" value="Class_I_gatase-like"/>
</dbReference>
<dbReference type="InterPro" id="IPR002161">
    <property type="entry name" value="PdxT/SNO"/>
</dbReference>
<dbReference type="InterPro" id="IPR021196">
    <property type="entry name" value="PdxT/SNO_CS"/>
</dbReference>
<dbReference type="NCBIfam" id="TIGR03800">
    <property type="entry name" value="PLP_synth_Pdx2"/>
    <property type="match status" value="1"/>
</dbReference>
<dbReference type="PANTHER" id="PTHR31559">
    <property type="entry name" value="PYRIDOXAL 5'-PHOSPHATE SYNTHASE SUBUNIT SNO"/>
    <property type="match status" value="1"/>
</dbReference>
<dbReference type="PANTHER" id="PTHR31559:SF0">
    <property type="entry name" value="PYRIDOXAL 5'-PHOSPHATE SYNTHASE SUBUNIT SNO1-RELATED"/>
    <property type="match status" value="1"/>
</dbReference>
<dbReference type="Pfam" id="PF01174">
    <property type="entry name" value="SNO"/>
    <property type="match status" value="1"/>
</dbReference>
<dbReference type="PIRSF" id="PIRSF005639">
    <property type="entry name" value="Glut_amidoT_SNO"/>
    <property type="match status" value="1"/>
</dbReference>
<dbReference type="SUPFAM" id="SSF52317">
    <property type="entry name" value="Class I glutamine amidotransferase-like"/>
    <property type="match status" value="1"/>
</dbReference>
<dbReference type="PROSITE" id="PS01236">
    <property type="entry name" value="PDXT_SNO_1"/>
    <property type="match status" value="1"/>
</dbReference>
<dbReference type="PROSITE" id="PS51130">
    <property type="entry name" value="PDXT_SNO_2"/>
    <property type="match status" value="1"/>
</dbReference>
<protein>
    <recommendedName>
        <fullName evidence="1">Pyridoxal 5'-phosphate synthase subunit PdxT</fullName>
        <ecNumber evidence="1">4.3.3.6</ecNumber>
    </recommendedName>
    <alternativeName>
        <fullName evidence="1">Pdx2</fullName>
    </alternativeName>
    <alternativeName>
        <fullName evidence="1">Pyridoxal 5'-phosphate synthase glutaminase subunit</fullName>
        <ecNumber evidence="1">3.5.1.2</ecNumber>
    </alternativeName>
</protein>